<dbReference type="EC" id="2.6.99.2" evidence="1"/>
<dbReference type="EMBL" id="AL590842">
    <property type="protein sequence ID" value="CAL21538.1"/>
    <property type="molecule type" value="Genomic_DNA"/>
</dbReference>
<dbReference type="EMBL" id="AE009952">
    <property type="protein sequence ID" value="AAM84874.1"/>
    <property type="molecule type" value="Genomic_DNA"/>
</dbReference>
<dbReference type="EMBL" id="AE017042">
    <property type="protein sequence ID" value="AAS62723.1"/>
    <property type="molecule type" value="Genomic_DNA"/>
</dbReference>
<dbReference type="PIR" id="AG0356">
    <property type="entry name" value="AG0356"/>
</dbReference>
<dbReference type="RefSeq" id="WP_002211569.1">
    <property type="nucleotide sequence ID" value="NZ_WUCM01000006.1"/>
</dbReference>
<dbReference type="RefSeq" id="YP_002347860.1">
    <property type="nucleotide sequence ID" value="NC_003143.1"/>
</dbReference>
<dbReference type="PDB" id="3F4N">
    <property type="method" value="X-ray"/>
    <property type="resolution" value="2.40 A"/>
    <property type="chains" value="A/B/C/D/E/F/G/H=1-243"/>
</dbReference>
<dbReference type="PDBsum" id="3F4N"/>
<dbReference type="SMR" id="Q8ZCP4"/>
<dbReference type="IntAct" id="Q8ZCP4">
    <property type="interactions" value="1"/>
</dbReference>
<dbReference type="STRING" id="214092.YPO2930"/>
<dbReference type="PaxDb" id="214092-YPO2930"/>
<dbReference type="DNASU" id="1146247"/>
<dbReference type="EnsemblBacteria" id="AAS62723">
    <property type="protein sequence ID" value="AAS62723"/>
    <property type="gene ID" value="YP_2525"/>
</dbReference>
<dbReference type="GeneID" id="57975884"/>
<dbReference type="KEGG" id="ype:YPO2930"/>
<dbReference type="KEGG" id="ypk:y1300"/>
<dbReference type="KEGG" id="ypm:YP_2525"/>
<dbReference type="PATRIC" id="fig|214092.21.peg.3381"/>
<dbReference type="eggNOG" id="COG0854">
    <property type="taxonomic scope" value="Bacteria"/>
</dbReference>
<dbReference type="HOGENOM" id="CLU_074563_0_0_6"/>
<dbReference type="OMA" id="ERHIRYQ"/>
<dbReference type="OrthoDB" id="9806590at2"/>
<dbReference type="UniPathway" id="UPA00244">
    <property type="reaction ID" value="UER00313"/>
</dbReference>
<dbReference type="EvolutionaryTrace" id="Q8ZCP4"/>
<dbReference type="Proteomes" id="UP000000815">
    <property type="component" value="Chromosome"/>
</dbReference>
<dbReference type="Proteomes" id="UP000001019">
    <property type="component" value="Chromosome"/>
</dbReference>
<dbReference type="Proteomes" id="UP000002490">
    <property type="component" value="Chromosome"/>
</dbReference>
<dbReference type="GO" id="GO:0005829">
    <property type="term" value="C:cytosol"/>
    <property type="evidence" value="ECO:0000318"/>
    <property type="project" value="GO_Central"/>
</dbReference>
<dbReference type="GO" id="GO:0033856">
    <property type="term" value="F:pyridoxine 5'-phosphate synthase activity"/>
    <property type="evidence" value="ECO:0000318"/>
    <property type="project" value="GO_Central"/>
</dbReference>
<dbReference type="GO" id="GO:0008615">
    <property type="term" value="P:pyridoxine biosynthetic process"/>
    <property type="evidence" value="ECO:0000318"/>
    <property type="project" value="GO_Central"/>
</dbReference>
<dbReference type="CDD" id="cd00003">
    <property type="entry name" value="PNPsynthase"/>
    <property type="match status" value="1"/>
</dbReference>
<dbReference type="FunFam" id="3.20.20.70:FF:000042">
    <property type="entry name" value="Pyridoxine 5'-phosphate synthase"/>
    <property type="match status" value="1"/>
</dbReference>
<dbReference type="Gene3D" id="3.20.20.70">
    <property type="entry name" value="Aldolase class I"/>
    <property type="match status" value="1"/>
</dbReference>
<dbReference type="HAMAP" id="MF_00279">
    <property type="entry name" value="PdxJ"/>
    <property type="match status" value="1"/>
</dbReference>
<dbReference type="InterPro" id="IPR013785">
    <property type="entry name" value="Aldolase_TIM"/>
</dbReference>
<dbReference type="InterPro" id="IPR004569">
    <property type="entry name" value="PyrdxlP_synth_PdxJ"/>
</dbReference>
<dbReference type="InterPro" id="IPR036130">
    <property type="entry name" value="Pyridoxine-5'_phos_synth"/>
</dbReference>
<dbReference type="NCBIfam" id="TIGR00559">
    <property type="entry name" value="pdxJ"/>
    <property type="match status" value="1"/>
</dbReference>
<dbReference type="NCBIfam" id="NF003623">
    <property type="entry name" value="PRK05265.1-1"/>
    <property type="match status" value="1"/>
</dbReference>
<dbReference type="NCBIfam" id="NF003624">
    <property type="entry name" value="PRK05265.1-2"/>
    <property type="match status" value="1"/>
</dbReference>
<dbReference type="NCBIfam" id="NF003625">
    <property type="entry name" value="PRK05265.1-3"/>
    <property type="match status" value="1"/>
</dbReference>
<dbReference type="NCBIfam" id="NF003627">
    <property type="entry name" value="PRK05265.1-5"/>
    <property type="match status" value="1"/>
</dbReference>
<dbReference type="PANTHER" id="PTHR30456">
    <property type="entry name" value="PYRIDOXINE 5'-PHOSPHATE SYNTHASE"/>
    <property type="match status" value="1"/>
</dbReference>
<dbReference type="PANTHER" id="PTHR30456:SF0">
    <property type="entry name" value="PYRIDOXINE 5'-PHOSPHATE SYNTHASE"/>
    <property type="match status" value="1"/>
</dbReference>
<dbReference type="Pfam" id="PF03740">
    <property type="entry name" value="PdxJ"/>
    <property type="match status" value="1"/>
</dbReference>
<dbReference type="SUPFAM" id="SSF63892">
    <property type="entry name" value="Pyridoxine 5'-phosphate synthase"/>
    <property type="match status" value="1"/>
</dbReference>
<comment type="function">
    <text evidence="1">Catalyzes the complicated ring closure reaction between the two acyclic compounds 1-deoxy-D-xylulose-5-phosphate (DXP) and 3-amino-2-oxopropyl phosphate (1-amino-acetone-3-phosphate or AAP) to form pyridoxine 5'-phosphate (PNP) and inorganic phosphate.</text>
</comment>
<comment type="catalytic activity">
    <reaction evidence="1">
        <text>3-amino-2-oxopropyl phosphate + 1-deoxy-D-xylulose 5-phosphate = pyridoxine 5'-phosphate + phosphate + 2 H2O + H(+)</text>
        <dbReference type="Rhea" id="RHEA:15265"/>
        <dbReference type="ChEBI" id="CHEBI:15377"/>
        <dbReference type="ChEBI" id="CHEBI:15378"/>
        <dbReference type="ChEBI" id="CHEBI:43474"/>
        <dbReference type="ChEBI" id="CHEBI:57279"/>
        <dbReference type="ChEBI" id="CHEBI:57792"/>
        <dbReference type="ChEBI" id="CHEBI:58589"/>
        <dbReference type="EC" id="2.6.99.2"/>
    </reaction>
</comment>
<comment type="pathway">
    <text evidence="1">Cofactor biosynthesis; pyridoxine 5'-phosphate biosynthesis; pyridoxine 5'-phosphate from D-erythrose 4-phosphate: step 5/5.</text>
</comment>
<comment type="subunit">
    <text evidence="1">Homooctamer; tetramer of dimers.</text>
</comment>
<comment type="subcellular location">
    <subcellularLocation>
        <location evidence="1">Cytoplasm</location>
    </subcellularLocation>
</comment>
<comment type="similarity">
    <text evidence="1">Belongs to the PNP synthase family.</text>
</comment>
<organism>
    <name type="scientific">Yersinia pestis</name>
    <dbReference type="NCBI Taxonomy" id="632"/>
    <lineage>
        <taxon>Bacteria</taxon>
        <taxon>Pseudomonadati</taxon>
        <taxon>Pseudomonadota</taxon>
        <taxon>Gammaproteobacteria</taxon>
        <taxon>Enterobacterales</taxon>
        <taxon>Yersiniaceae</taxon>
        <taxon>Yersinia</taxon>
    </lineage>
</organism>
<evidence type="ECO:0000255" key="1">
    <source>
        <dbReference type="HAMAP-Rule" id="MF_00279"/>
    </source>
</evidence>
<evidence type="ECO:0007829" key="2">
    <source>
        <dbReference type="PDB" id="3F4N"/>
    </source>
</evidence>
<sequence>MADLLLGVNIDHIATLRNARGTIYPDPVQAAFIAEQAGADGITVHLREDRRHITDRDVRILRQTIQTRMNLEMAVTDEMVDIACDIKPHFCCLVPEKRQEVTTEGGLDVAGQVDKMTLAVGRLADVGILVSLFIDADFRQIDAAVAAGAPYIEIHTGAYADASTVLERQAELMRIAKAATYAAGKGLKVNAGHGLTYHNVQPIAALPEMHELNIGHAIIGQAVMTGLAAAVTDMKVLMREARR</sequence>
<feature type="chain" id="PRO_0000190144" description="Pyridoxine 5'-phosphate synthase">
    <location>
        <begin position="1"/>
        <end position="243"/>
    </location>
</feature>
<feature type="active site" description="Proton acceptor" evidence="1">
    <location>
        <position position="45"/>
    </location>
</feature>
<feature type="active site" description="Proton acceptor" evidence="1">
    <location>
        <position position="72"/>
    </location>
</feature>
<feature type="active site" description="Proton donor" evidence="1">
    <location>
        <position position="193"/>
    </location>
</feature>
<feature type="binding site" evidence="1">
    <location>
        <position position="9"/>
    </location>
    <ligand>
        <name>3-amino-2-oxopropyl phosphate</name>
        <dbReference type="ChEBI" id="CHEBI:57279"/>
    </ligand>
</feature>
<feature type="binding site" evidence="1">
    <location>
        <begin position="11"/>
        <end position="12"/>
    </location>
    <ligand>
        <name>1-deoxy-D-xylulose 5-phosphate</name>
        <dbReference type="ChEBI" id="CHEBI:57792"/>
    </ligand>
</feature>
<feature type="binding site" evidence="1">
    <location>
        <position position="20"/>
    </location>
    <ligand>
        <name>3-amino-2-oxopropyl phosphate</name>
        <dbReference type="ChEBI" id="CHEBI:57279"/>
    </ligand>
</feature>
<feature type="binding site" evidence="1">
    <location>
        <position position="47"/>
    </location>
    <ligand>
        <name>1-deoxy-D-xylulose 5-phosphate</name>
        <dbReference type="ChEBI" id="CHEBI:57792"/>
    </ligand>
</feature>
<feature type="binding site" evidence="1">
    <location>
        <position position="52"/>
    </location>
    <ligand>
        <name>1-deoxy-D-xylulose 5-phosphate</name>
        <dbReference type="ChEBI" id="CHEBI:57792"/>
    </ligand>
</feature>
<feature type="binding site" evidence="1">
    <location>
        <position position="102"/>
    </location>
    <ligand>
        <name>1-deoxy-D-xylulose 5-phosphate</name>
        <dbReference type="ChEBI" id="CHEBI:57792"/>
    </ligand>
</feature>
<feature type="binding site" evidence="1">
    <location>
        <position position="194"/>
    </location>
    <ligand>
        <name>3-amino-2-oxopropyl phosphate</name>
        <dbReference type="ChEBI" id="CHEBI:57279"/>
    </ligand>
</feature>
<feature type="binding site" evidence="1">
    <location>
        <begin position="215"/>
        <end position="216"/>
    </location>
    <ligand>
        <name>3-amino-2-oxopropyl phosphate</name>
        <dbReference type="ChEBI" id="CHEBI:57279"/>
    </ligand>
</feature>
<feature type="site" description="Transition state stabilizer" evidence="1">
    <location>
        <position position="153"/>
    </location>
</feature>
<feature type="strand" evidence="2">
    <location>
        <begin position="5"/>
        <end position="9"/>
    </location>
</feature>
<feature type="helix" evidence="2">
    <location>
        <begin position="11"/>
        <end position="18"/>
    </location>
</feature>
<feature type="turn" evidence="2">
    <location>
        <begin position="19"/>
        <end position="21"/>
    </location>
</feature>
<feature type="helix" evidence="2">
    <location>
        <begin position="27"/>
        <end position="36"/>
    </location>
</feature>
<feature type="strand" evidence="2">
    <location>
        <begin position="40"/>
        <end position="45"/>
    </location>
</feature>
<feature type="strand" evidence="2">
    <location>
        <begin position="51"/>
        <end position="53"/>
    </location>
</feature>
<feature type="helix" evidence="2">
    <location>
        <begin position="55"/>
        <end position="64"/>
    </location>
</feature>
<feature type="strand" evidence="2">
    <location>
        <begin position="69"/>
        <end position="75"/>
    </location>
</feature>
<feature type="helix" evidence="2">
    <location>
        <begin position="77"/>
        <end position="86"/>
    </location>
</feature>
<feature type="strand" evidence="2">
    <location>
        <begin position="89"/>
        <end position="94"/>
    </location>
</feature>
<feature type="helix" evidence="2">
    <location>
        <begin position="98"/>
        <end position="100"/>
    </location>
</feature>
<feature type="strand" evidence="2">
    <location>
        <begin position="105"/>
        <end position="107"/>
    </location>
</feature>
<feature type="helix" evidence="2">
    <location>
        <begin position="110"/>
        <end position="112"/>
    </location>
</feature>
<feature type="helix" evidence="2">
    <location>
        <begin position="113"/>
        <end position="124"/>
    </location>
</feature>
<feature type="turn" evidence="2">
    <location>
        <begin position="125"/>
        <end position="127"/>
    </location>
</feature>
<feature type="strand" evidence="2">
    <location>
        <begin position="129"/>
        <end position="134"/>
    </location>
</feature>
<feature type="helix" evidence="2">
    <location>
        <begin position="138"/>
        <end position="146"/>
    </location>
</feature>
<feature type="strand" evidence="2">
    <location>
        <begin position="150"/>
        <end position="155"/>
    </location>
</feature>
<feature type="helix" evidence="2">
    <location>
        <begin position="157"/>
        <end position="161"/>
    </location>
</feature>
<feature type="helix" evidence="2">
    <location>
        <begin position="165"/>
        <end position="184"/>
    </location>
</feature>
<feature type="strand" evidence="2">
    <location>
        <begin position="188"/>
        <end position="194"/>
    </location>
</feature>
<feature type="turn" evidence="2">
    <location>
        <begin position="197"/>
        <end position="199"/>
    </location>
</feature>
<feature type="helix" evidence="2">
    <location>
        <begin position="200"/>
        <end position="205"/>
    </location>
</feature>
<feature type="strand" evidence="2">
    <location>
        <begin position="209"/>
        <end position="214"/>
    </location>
</feature>
<feature type="helix" evidence="2">
    <location>
        <begin position="216"/>
        <end position="225"/>
    </location>
</feature>
<feature type="helix" evidence="2">
    <location>
        <begin position="227"/>
        <end position="241"/>
    </location>
</feature>
<accession>Q8ZCP4</accession>
<accession>Q0WCX8</accession>
<gene>
    <name evidence="1" type="primary">pdxJ</name>
    <name type="ordered locus">YPO2930</name>
    <name type="ordered locus">y1300</name>
    <name type="ordered locus">YP_2525</name>
</gene>
<name>PDXJ_YERPE</name>
<protein>
    <recommendedName>
        <fullName evidence="1">Pyridoxine 5'-phosphate synthase</fullName>
        <shortName evidence="1">PNP synthase</shortName>
        <ecNumber evidence="1">2.6.99.2</ecNumber>
    </recommendedName>
</protein>
<keyword id="KW-0002">3D-structure</keyword>
<keyword id="KW-0963">Cytoplasm</keyword>
<keyword id="KW-0664">Pyridoxine biosynthesis</keyword>
<keyword id="KW-1185">Reference proteome</keyword>
<keyword id="KW-0808">Transferase</keyword>
<proteinExistence type="evidence at protein level"/>
<reference key="1">
    <citation type="journal article" date="2001" name="Nature">
        <title>Genome sequence of Yersinia pestis, the causative agent of plague.</title>
        <authorList>
            <person name="Parkhill J."/>
            <person name="Wren B.W."/>
            <person name="Thomson N.R."/>
            <person name="Titball R.W."/>
            <person name="Holden M.T.G."/>
            <person name="Prentice M.B."/>
            <person name="Sebaihia M."/>
            <person name="James K.D."/>
            <person name="Churcher C.M."/>
            <person name="Mungall K.L."/>
            <person name="Baker S."/>
            <person name="Basham D."/>
            <person name="Bentley S.D."/>
            <person name="Brooks K."/>
            <person name="Cerdeno-Tarraga A.-M."/>
            <person name="Chillingworth T."/>
            <person name="Cronin A."/>
            <person name="Davies R.M."/>
            <person name="Davis P."/>
            <person name="Dougan G."/>
            <person name="Feltwell T."/>
            <person name="Hamlin N."/>
            <person name="Holroyd S."/>
            <person name="Jagels K."/>
            <person name="Karlyshev A.V."/>
            <person name="Leather S."/>
            <person name="Moule S."/>
            <person name="Oyston P.C.F."/>
            <person name="Quail M.A."/>
            <person name="Rutherford K.M."/>
            <person name="Simmonds M."/>
            <person name="Skelton J."/>
            <person name="Stevens K."/>
            <person name="Whitehead S."/>
            <person name="Barrell B.G."/>
        </authorList>
    </citation>
    <scope>NUCLEOTIDE SEQUENCE [LARGE SCALE GENOMIC DNA]</scope>
    <source>
        <strain>CO-92 / Biovar Orientalis</strain>
    </source>
</reference>
<reference key="2">
    <citation type="journal article" date="2002" name="J. Bacteriol.">
        <title>Genome sequence of Yersinia pestis KIM.</title>
        <authorList>
            <person name="Deng W."/>
            <person name="Burland V."/>
            <person name="Plunkett G. III"/>
            <person name="Boutin A."/>
            <person name="Mayhew G.F."/>
            <person name="Liss P."/>
            <person name="Perna N.T."/>
            <person name="Rose D.J."/>
            <person name="Mau B."/>
            <person name="Zhou S."/>
            <person name="Schwartz D.C."/>
            <person name="Fetherston J.D."/>
            <person name="Lindler L.E."/>
            <person name="Brubaker R.R."/>
            <person name="Plano G.V."/>
            <person name="Straley S.C."/>
            <person name="McDonough K.A."/>
            <person name="Nilles M.L."/>
            <person name="Matson J.S."/>
            <person name="Blattner F.R."/>
            <person name="Perry R.D."/>
        </authorList>
    </citation>
    <scope>NUCLEOTIDE SEQUENCE [LARGE SCALE GENOMIC DNA]</scope>
    <source>
        <strain>KIM10+ / Biovar Mediaevalis</strain>
    </source>
</reference>
<reference key="3">
    <citation type="journal article" date="2004" name="DNA Res.">
        <title>Complete genome sequence of Yersinia pestis strain 91001, an isolate avirulent to humans.</title>
        <authorList>
            <person name="Song Y."/>
            <person name="Tong Z."/>
            <person name="Wang J."/>
            <person name="Wang L."/>
            <person name="Guo Z."/>
            <person name="Han Y."/>
            <person name="Zhang J."/>
            <person name="Pei D."/>
            <person name="Zhou D."/>
            <person name="Qin H."/>
            <person name="Pang X."/>
            <person name="Han Y."/>
            <person name="Zhai J."/>
            <person name="Li M."/>
            <person name="Cui B."/>
            <person name="Qi Z."/>
            <person name="Jin L."/>
            <person name="Dai R."/>
            <person name="Chen F."/>
            <person name="Li S."/>
            <person name="Ye C."/>
            <person name="Du Z."/>
            <person name="Lin W."/>
            <person name="Wang J."/>
            <person name="Yu J."/>
            <person name="Yang H."/>
            <person name="Wang J."/>
            <person name="Huang P."/>
            <person name="Yang R."/>
        </authorList>
    </citation>
    <scope>NUCLEOTIDE SEQUENCE [LARGE SCALE GENOMIC DNA]</scope>
    <source>
        <strain>91001 / Biovar Mediaevalis</strain>
    </source>
</reference>